<feature type="chain" id="PRO_0000327988" description="Translation initiation factor eIF2B subunit alpha">
    <location>
        <begin position="1"/>
        <end position="321"/>
    </location>
</feature>
<gene>
    <name type="primary">eif2b1</name>
    <name type="ORF">DDB_G0288961</name>
</gene>
<evidence type="ECO:0000250" key="1">
    <source>
        <dbReference type="UniProtKB" id="Q14232"/>
    </source>
</evidence>
<evidence type="ECO:0000250" key="2">
    <source>
        <dbReference type="UniProtKB" id="Q9USP0"/>
    </source>
</evidence>
<evidence type="ECO:0000305" key="3"/>
<accession>Q54I81</accession>
<sequence length="321" mass="35645">MTGGLNKDFDWVVAKFEEMIKRETEVSIAIPTIRILIDVIRKSNSTTVVGLQKELEDAVKQLKSCPYNQSISLSSVCDSFIRFVTKRTELDFPNFDTCKSNLVERGEQLSNKSSMSRTKISQLADKFIRDGVTILVHGFSRVVLGLLLHAAFQGKRFSVIVTESRPDSSGYKTAARLQAANIPVKLIMDGGVSRIIDKVDYVLVGAEAIVENGGIVNKIGTYQISIVAKAFKKPFYVAAESFKFTRSYPLNQSDIENLKNDHISEPFKACRSCSSCENPEQLTIDSPTLDYTPPSYITLLFTELGVLTPSAVSDELIKLYC</sequence>
<protein>
    <recommendedName>
        <fullName>Translation initiation factor eIF2B subunit alpha</fullName>
    </recommendedName>
    <alternativeName>
        <fullName>eIF2B GDP-GTP exchange factor subunit alpha</fullName>
    </alternativeName>
</protein>
<proteinExistence type="inferred from homology"/>
<dbReference type="EMBL" id="AAFI02000126">
    <property type="protein sequence ID" value="EAL63004.1"/>
    <property type="molecule type" value="Genomic_DNA"/>
</dbReference>
<dbReference type="RefSeq" id="XP_636498.1">
    <property type="nucleotide sequence ID" value="XM_631406.1"/>
</dbReference>
<dbReference type="SMR" id="Q54I81"/>
<dbReference type="FunCoup" id="Q54I81">
    <property type="interactions" value="1043"/>
</dbReference>
<dbReference type="STRING" id="44689.Q54I81"/>
<dbReference type="PaxDb" id="44689-DDB0231375"/>
<dbReference type="EnsemblProtists" id="EAL63004">
    <property type="protein sequence ID" value="EAL63004"/>
    <property type="gene ID" value="DDB_G0288961"/>
</dbReference>
<dbReference type="GeneID" id="8626881"/>
<dbReference type="KEGG" id="ddi:DDB_G0288961"/>
<dbReference type="dictyBase" id="DDB_G0288961">
    <property type="gene designation" value="eif2b1"/>
</dbReference>
<dbReference type="VEuPathDB" id="AmoebaDB:DDB_G0288961"/>
<dbReference type="eggNOG" id="KOG1466">
    <property type="taxonomic scope" value="Eukaryota"/>
</dbReference>
<dbReference type="HOGENOM" id="CLU_016218_0_2_1"/>
<dbReference type="InParanoid" id="Q54I81"/>
<dbReference type="OMA" id="GDWESCK"/>
<dbReference type="PhylomeDB" id="Q54I81"/>
<dbReference type="Reactome" id="R-DDI-72731">
    <property type="pathway name" value="Recycling of eIF2:GDP"/>
</dbReference>
<dbReference type="PRO" id="PR:Q54I81"/>
<dbReference type="Proteomes" id="UP000002195">
    <property type="component" value="Chromosome 5"/>
</dbReference>
<dbReference type="GO" id="GO:0005829">
    <property type="term" value="C:cytosol"/>
    <property type="evidence" value="ECO:0007669"/>
    <property type="project" value="UniProtKB-SubCell"/>
</dbReference>
<dbReference type="GO" id="GO:0005851">
    <property type="term" value="C:eukaryotic translation initiation factor 2B complex"/>
    <property type="evidence" value="ECO:0000250"/>
    <property type="project" value="UniProtKB"/>
</dbReference>
<dbReference type="GO" id="GO:0005085">
    <property type="term" value="F:guanyl-nucleotide exchange factor activity"/>
    <property type="evidence" value="ECO:0000250"/>
    <property type="project" value="UniProtKB"/>
</dbReference>
<dbReference type="GO" id="GO:0003743">
    <property type="term" value="F:translation initiation factor activity"/>
    <property type="evidence" value="ECO:0007669"/>
    <property type="project" value="UniProtKB-KW"/>
</dbReference>
<dbReference type="GO" id="GO:0002183">
    <property type="term" value="P:cytoplasmic translational initiation"/>
    <property type="evidence" value="ECO:0000250"/>
    <property type="project" value="UniProtKB"/>
</dbReference>
<dbReference type="GO" id="GO:0006413">
    <property type="term" value="P:translational initiation"/>
    <property type="evidence" value="ECO:0000250"/>
    <property type="project" value="UniProtKB"/>
</dbReference>
<dbReference type="FunFam" id="1.20.120.1070:FF:000012">
    <property type="entry name" value="Translation initiation factor eIF-2B alpha subunit"/>
    <property type="match status" value="1"/>
</dbReference>
<dbReference type="FunFam" id="3.40.50.10470:FF:000059">
    <property type="entry name" value="Translation initiation factor eIF-2B alpha subunit"/>
    <property type="match status" value="1"/>
</dbReference>
<dbReference type="Gene3D" id="3.40.50.10470">
    <property type="entry name" value="Translation initiation factor eif-2b, domain 2"/>
    <property type="match status" value="1"/>
</dbReference>
<dbReference type="Gene3D" id="1.20.120.1070">
    <property type="entry name" value="Translation initiation factor eIF-2B, N-terminal domain"/>
    <property type="match status" value="1"/>
</dbReference>
<dbReference type="InterPro" id="IPR051501">
    <property type="entry name" value="eIF2B_alpha/beta/delta"/>
</dbReference>
<dbReference type="InterPro" id="IPR042528">
    <property type="entry name" value="elF-2B_alpha_N"/>
</dbReference>
<dbReference type="InterPro" id="IPR000649">
    <property type="entry name" value="IF-2B-related"/>
</dbReference>
<dbReference type="InterPro" id="IPR042529">
    <property type="entry name" value="IF_2B-like_C"/>
</dbReference>
<dbReference type="InterPro" id="IPR037171">
    <property type="entry name" value="NagB/RpiA_transferase-like"/>
</dbReference>
<dbReference type="PANTHER" id="PTHR45860">
    <property type="entry name" value="TRANSLATION INITIATION FACTOR EIF-2B SUBUNIT ALPHA"/>
    <property type="match status" value="1"/>
</dbReference>
<dbReference type="PANTHER" id="PTHR45860:SF1">
    <property type="entry name" value="TRANSLATION INITIATION FACTOR EIF-2B SUBUNIT ALPHA"/>
    <property type="match status" value="1"/>
</dbReference>
<dbReference type="Pfam" id="PF01008">
    <property type="entry name" value="IF-2B"/>
    <property type="match status" value="1"/>
</dbReference>
<dbReference type="SUPFAM" id="SSF100950">
    <property type="entry name" value="NagB/RpiA/CoA transferase-like"/>
    <property type="match status" value="1"/>
</dbReference>
<organism>
    <name type="scientific">Dictyostelium discoideum</name>
    <name type="common">Social amoeba</name>
    <dbReference type="NCBI Taxonomy" id="44689"/>
    <lineage>
        <taxon>Eukaryota</taxon>
        <taxon>Amoebozoa</taxon>
        <taxon>Evosea</taxon>
        <taxon>Eumycetozoa</taxon>
        <taxon>Dictyostelia</taxon>
        <taxon>Dictyosteliales</taxon>
        <taxon>Dictyosteliaceae</taxon>
        <taxon>Dictyostelium</taxon>
    </lineage>
</organism>
<reference key="1">
    <citation type="journal article" date="2005" name="Nature">
        <title>The genome of the social amoeba Dictyostelium discoideum.</title>
        <authorList>
            <person name="Eichinger L."/>
            <person name="Pachebat J.A."/>
            <person name="Gloeckner G."/>
            <person name="Rajandream M.A."/>
            <person name="Sucgang R."/>
            <person name="Berriman M."/>
            <person name="Song J."/>
            <person name="Olsen R."/>
            <person name="Szafranski K."/>
            <person name="Xu Q."/>
            <person name="Tunggal B."/>
            <person name="Kummerfeld S."/>
            <person name="Madera M."/>
            <person name="Konfortov B.A."/>
            <person name="Rivero F."/>
            <person name="Bankier A.T."/>
            <person name="Lehmann R."/>
            <person name="Hamlin N."/>
            <person name="Davies R."/>
            <person name="Gaudet P."/>
            <person name="Fey P."/>
            <person name="Pilcher K."/>
            <person name="Chen G."/>
            <person name="Saunders D."/>
            <person name="Sodergren E.J."/>
            <person name="Davis P."/>
            <person name="Kerhornou A."/>
            <person name="Nie X."/>
            <person name="Hall N."/>
            <person name="Anjard C."/>
            <person name="Hemphill L."/>
            <person name="Bason N."/>
            <person name="Farbrother P."/>
            <person name="Desany B."/>
            <person name="Just E."/>
            <person name="Morio T."/>
            <person name="Rost R."/>
            <person name="Churcher C.M."/>
            <person name="Cooper J."/>
            <person name="Haydock S."/>
            <person name="van Driessche N."/>
            <person name="Cronin A."/>
            <person name="Goodhead I."/>
            <person name="Muzny D.M."/>
            <person name="Mourier T."/>
            <person name="Pain A."/>
            <person name="Lu M."/>
            <person name="Harper D."/>
            <person name="Lindsay R."/>
            <person name="Hauser H."/>
            <person name="James K.D."/>
            <person name="Quiles M."/>
            <person name="Madan Babu M."/>
            <person name="Saito T."/>
            <person name="Buchrieser C."/>
            <person name="Wardroper A."/>
            <person name="Felder M."/>
            <person name="Thangavelu M."/>
            <person name="Johnson D."/>
            <person name="Knights A."/>
            <person name="Loulseged H."/>
            <person name="Mungall K.L."/>
            <person name="Oliver K."/>
            <person name="Price C."/>
            <person name="Quail M.A."/>
            <person name="Urushihara H."/>
            <person name="Hernandez J."/>
            <person name="Rabbinowitsch E."/>
            <person name="Steffen D."/>
            <person name="Sanders M."/>
            <person name="Ma J."/>
            <person name="Kohara Y."/>
            <person name="Sharp S."/>
            <person name="Simmonds M.N."/>
            <person name="Spiegler S."/>
            <person name="Tivey A."/>
            <person name="Sugano S."/>
            <person name="White B."/>
            <person name="Walker D."/>
            <person name="Woodward J.R."/>
            <person name="Winckler T."/>
            <person name="Tanaka Y."/>
            <person name="Shaulsky G."/>
            <person name="Schleicher M."/>
            <person name="Weinstock G.M."/>
            <person name="Rosenthal A."/>
            <person name="Cox E.C."/>
            <person name="Chisholm R.L."/>
            <person name="Gibbs R.A."/>
            <person name="Loomis W.F."/>
            <person name="Platzer M."/>
            <person name="Kay R.R."/>
            <person name="Williams J.G."/>
            <person name="Dear P.H."/>
            <person name="Noegel A.A."/>
            <person name="Barrell B.G."/>
            <person name="Kuspa A."/>
        </authorList>
    </citation>
    <scope>NUCLEOTIDE SEQUENCE [LARGE SCALE GENOMIC DNA]</scope>
    <source>
        <strain>AX4</strain>
    </source>
</reference>
<name>EI2BA_DICDI</name>
<comment type="function">
    <text evidence="1">Acts as a component of the translation initiation factor 2B (eIF2B) complex, which catalyzes the exchange of GDP for GTP on eukaryotic initiation factor 2 (eIF2) gamma subunit. Its guanine nucleotide exchange factor activity is repressed when bound to eIF2 complex phosphorylated on the alpha subunit, thereby limiting the amount of methionyl-initiator methionine tRNA available to the ribosome and consequently global translation is repressed.</text>
</comment>
<comment type="subunit">
    <text evidence="1">Component of the translation initiation factor 2B (eIF2B) complex which is a heterodecamer of two sets of five different subunits: alpha, beta, gamma, delta and epsilon. Subunits alpha, beta and delta comprise a regulatory subcomplex and subunits epsilon and gamma comprise a catalytic subcomplex. Within the complex, the hexameric regulatory complex resides at the center, with the two heterodimeric catalytic subcomplexes bound on opposite sides.</text>
</comment>
<comment type="subcellular location">
    <subcellularLocation>
        <location evidence="2">Cytoplasm</location>
        <location evidence="2">Cytosol</location>
    </subcellularLocation>
</comment>
<comment type="similarity">
    <text evidence="3">Belongs to the eIF-2B alpha/beta/delta subunits family.</text>
</comment>
<keyword id="KW-0963">Cytoplasm</keyword>
<keyword id="KW-0396">Initiation factor</keyword>
<keyword id="KW-0648">Protein biosynthesis</keyword>
<keyword id="KW-1185">Reference proteome</keyword>